<reference key="1">
    <citation type="journal article" date="2005" name="Science">
        <title>The genome of the basidiomycetous yeast and human pathogen Cryptococcus neoformans.</title>
        <authorList>
            <person name="Loftus B.J."/>
            <person name="Fung E."/>
            <person name="Roncaglia P."/>
            <person name="Rowley D."/>
            <person name="Amedeo P."/>
            <person name="Bruno D."/>
            <person name="Vamathevan J."/>
            <person name="Miranda M."/>
            <person name="Anderson I.J."/>
            <person name="Fraser J.A."/>
            <person name="Allen J.E."/>
            <person name="Bosdet I.E."/>
            <person name="Brent M.R."/>
            <person name="Chiu R."/>
            <person name="Doering T.L."/>
            <person name="Donlin M.J."/>
            <person name="D'Souza C.A."/>
            <person name="Fox D.S."/>
            <person name="Grinberg V."/>
            <person name="Fu J."/>
            <person name="Fukushima M."/>
            <person name="Haas B.J."/>
            <person name="Huang J.C."/>
            <person name="Janbon G."/>
            <person name="Jones S.J.M."/>
            <person name="Koo H.L."/>
            <person name="Krzywinski M.I."/>
            <person name="Kwon-Chung K.J."/>
            <person name="Lengeler K.B."/>
            <person name="Maiti R."/>
            <person name="Marra M.A."/>
            <person name="Marra R.E."/>
            <person name="Mathewson C.A."/>
            <person name="Mitchell T.G."/>
            <person name="Pertea M."/>
            <person name="Riggs F.R."/>
            <person name="Salzberg S.L."/>
            <person name="Schein J.E."/>
            <person name="Shvartsbeyn A."/>
            <person name="Shin H."/>
            <person name="Shumway M."/>
            <person name="Specht C.A."/>
            <person name="Suh B.B."/>
            <person name="Tenney A."/>
            <person name="Utterback T.R."/>
            <person name="Wickes B.L."/>
            <person name="Wortman J.R."/>
            <person name="Wye N.H."/>
            <person name="Kronstad J.W."/>
            <person name="Lodge J.K."/>
            <person name="Heitman J."/>
            <person name="Davis R.W."/>
            <person name="Fraser C.M."/>
            <person name="Hyman R.W."/>
        </authorList>
    </citation>
    <scope>NUCLEOTIDE SEQUENCE [LARGE SCALE GENOMIC DNA]</scope>
    <source>
        <strain>JEC21 / ATCC MYA-565</strain>
    </source>
</reference>
<evidence type="ECO:0000250" key="1"/>
<evidence type="ECO:0000256" key="2">
    <source>
        <dbReference type="SAM" id="MobiDB-lite"/>
    </source>
</evidence>
<evidence type="ECO:0000305" key="3"/>
<accession>P0CM60</accession>
<accession>Q560A4</accession>
<accession>Q5KPA7</accession>
<dbReference type="EMBL" id="AE017341">
    <property type="protein sequence ID" value="AAW40867.2"/>
    <property type="molecule type" value="Genomic_DNA"/>
</dbReference>
<dbReference type="RefSeq" id="XP_566686.1">
    <property type="nucleotide sequence ID" value="XM_566686.1"/>
</dbReference>
<dbReference type="SMR" id="P0CM60"/>
<dbReference type="FunCoup" id="P0CM60">
    <property type="interactions" value="33"/>
</dbReference>
<dbReference type="STRING" id="214684.P0CM60"/>
<dbReference type="PaxDb" id="214684-P0CM60"/>
<dbReference type="EnsemblFungi" id="AAW40867">
    <property type="protein sequence ID" value="AAW40867"/>
    <property type="gene ID" value="CNA03500"/>
</dbReference>
<dbReference type="GeneID" id="3253261"/>
<dbReference type="KEGG" id="cne:CNA03500"/>
<dbReference type="VEuPathDB" id="FungiDB:CNA03500"/>
<dbReference type="eggNOG" id="KOG4224">
    <property type="taxonomic scope" value="Eukaryota"/>
</dbReference>
<dbReference type="InParanoid" id="P0CM60"/>
<dbReference type="OrthoDB" id="7537227at2759"/>
<dbReference type="Proteomes" id="UP000002149">
    <property type="component" value="Chromosome 1"/>
</dbReference>
<dbReference type="GO" id="GO:0000329">
    <property type="term" value="C:fungal-type vacuole membrane"/>
    <property type="evidence" value="ECO:0000318"/>
    <property type="project" value="GO_Central"/>
</dbReference>
<dbReference type="GO" id="GO:0045121">
    <property type="term" value="C:membrane raft"/>
    <property type="evidence" value="ECO:0007669"/>
    <property type="project" value="EnsemblFungi"/>
</dbReference>
<dbReference type="GO" id="GO:0071563">
    <property type="term" value="C:Myo2p-Vac17p-Vac8p transport complex"/>
    <property type="evidence" value="ECO:0007669"/>
    <property type="project" value="EnsemblFungi"/>
</dbReference>
<dbReference type="GO" id="GO:0031965">
    <property type="term" value="C:nuclear membrane"/>
    <property type="evidence" value="ECO:0007669"/>
    <property type="project" value="EnsemblFungi"/>
</dbReference>
<dbReference type="GO" id="GO:0071561">
    <property type="term" value="C:nucleus-vacuole junction"/>
    <property type="evidence" value="ECO:0007669"/>
    <property type="project" value="EnsemblFungi"/>
</dbReference>
<dbReference type="GO" id="GO:0000407">
    <property type="term" value="C:phagophore assembly site"/>
    <property type="evidence" value="ECO:0007669"/>
    <property type="project" value="EnsemblFungi"/>
</dbReference>
<dbReference type="GO" id="GO:0042802">
    <property type="term" value="F:identical protein binding"/>
    <property type="evidence" value="ECO:0007669"/>
    <property type="project" value="EnsemblFungi"/>
</dbReference>
<dbReference type="GO" id="GO:0043495">
    <property type="term" value="F:protein-membrane adaptor activity"/>
    <property type="evidence" value="ECO:0000318"/>
    <property type="project" value="GO_Central"/>
</dbReference>
<dbReference type="GO" id="GO:0000045">
    <property type="term" value="P:autophagosome assembly"/>
    <property type="evidence" value="ECO:0000318"/>
    <property type="project" value="GO_Central"/>
</dbReference>
<dbReference type="GO" id="GO:0051656">
    <property type="term" value="P:establishment of organelle localization"/>
    <property type="evidence" value="ECO:0007669"/>
    <property type="project" value="EnsemblFungi"/>
</dbReference>
<dbReference type="GO" id="GO:0071562">
    <property type="term" value="P:nucleus-vacuole junction assembly"/>
    <property type="evidence" value="ECO:0000318"/>
    <property type="project" value="GO_Central"/>
</dbReference>
<dbReference type="GO" id="GO:0000425">
    <property type="term" value="P:pexophagy"/>
    <property type="evidence" value="ECO:0007669"/>
    <property type="project" value="EnsemblFungi"/>
</dbReference>
<dbReference type="GO" id="GO:0034727">
    <property type="term" value="P:piecemeal microautophagy of the nucleus"/>
    <property type="evidence" value="ECO:0007669"/>
    <property type="project" value="EnsemblFungi"/>
</dbReference>
<dbReference type="GO" id="GO:1903044">
    <property type="term" value="P:protein localization to membrane raft"/>
    <property type="evidence" value="ECO:0007669"/>
    <property type="project" value="EnsemblFungi"/>
</dbReference>
<dbReference type="GO" id="GO:0034497">
    <property type="term" value="P:protein localization to phagophore assembly site"/>
    <property type="evidence" value="ECO:0007669"/>
    <property type="project" value="EnsemblFungi"/>
</dbReference>
<dbReference type="GO" id="GO:0031503">
    <property type="term" value="P:protein-containing complex localization"/>
    <property type="evidence" value="ECO:0007669"/>
    <property type="project" value="EnsemblFungi"/>
</dbReference>
<dbReference type="GO" id="GO:0034517">
    <property type="term" value="P:ribophagy"/>
    <property type="evidence" value="ECO:0007669"/>
    <property type="project" value="EnsemblFungi"/>
</dbReference>
<dbReference type="GO" id="GO:0042144">
    <property type="term" value="P:vacuole fusion, non-autophagic"/>
    <property type="evidence" value="ECO:0007669"/>
    <property type="project" value="EnsemblFungi"/>
</dbReference>
<dbReference type="GO" id="GO:0000011">
    <property type="term" value="P:vacuole inheritance"/>
    <property type="evidence" value="ECO:0007669"/>
    <property type="project" value="EnsemblFungi"/>
</dbReference>
<dbReference type="FunFam" id="1.25.10.10:FF:000095">
    <property type="entry name" value="Vacuolar protein 8"/>
    <property type="match status" value="1"/>
</dbReference>
<dbReference type="FunFam" id="1.25.10.10:FF:000236">
    <property type="entry name" value="Vacuolar protein 8, variant"/>
    <property type="match status" value="1"/>
</dbReference>
<dbReference type="FunFam" id="1.25.10.10:FF:000340">
    <property type="entry name" value="Vacuolar protein 8, variant"/>
    <property type="match status" value="1"/>
</dbReference>
<dbReference type="Gene3D" id="1.25.10.10">
    <property type="entry name" value="Leucine-rich Repeat Variant"/>
    <property type="match status" value="3"/>
</dbReference>
<dbReference type="InterPro" id="IPR011989">
    <property type="entry name" value="ARM-like"/>
</dbReference>
<dbReference type="InterPro" id="IPR016024">
    <property type="entry name" value="ARM-type_fold"/>
</dbReference>
<dbReference type="InterPro" id="IPR000225">
    <property type="entry name" value="Armadillo"/>
</dbReference>
<dbReference type="InterPro" id="IPR045156">
    <property type="entry name" value="Vac8"/>
</dbReference>
<dbReference type="PANTHER" id="PTHR47249">
    <property type="entry name" value="VACUOLAR PROTEIN 8"/>
    <property type="match status" value="1"/>
</dbReference>
<dbReference type="PANTHER" id="PTHR47249:SF1">
    <property type="entry name" value="VACUOLAR PROTEIN 8"/>
    <property type="match status" value="1"/>
</dbReference>
<dbReference type="Pfam" id="PF00514">
    <property type="entry name" value="Arm"/>
    <property type="match status" value="6"/>
</dbReference>
<dbReference type="SMART" id="SM00185">
    <property type="entry name" value="ARM"/>
    <property type="match status" value="9"/>
</dbReference>
<dbReference type="SUPFAM" id="SSF48371">
    <property type="entry name" value="ARM repeat"/>
    <property type="match status" value="1"/>
</dbReference>
<dbReference type="PROSITE" id="PS50176">
    <property type="entry name" value="ARM_REPEAT"/>
    <property type="match status" value="7"/>
</dbReference>
<proteinExistence type="inferred from homology"/>
<organism>
    <name type="scientific">Cryptococcus neoformans var. neoformans serotype D (strain JEC21 / ATCC MYA-565)</name>
    <name type="common">Filobasidiella neoformans</name>
    <dbReference type="NCBI Taxonomy" id="214684"/>
    <lineage>
        <taxon>Eukaryota</taxon>
        <taxon>Fungi</taxon>
        <taxon>Dikarya</taxon>
        <taxon>Basidiomycota</taxon>
        <taxon>Agaricomycotina</taxon>
        <taxon>Tremellomycetes</taxon>
        <taxon>Tremellales</taxon>
        <taxon>Cryptococcaceae</taxon>
        <taxon>Cryptococcus</taxon>
        <taxon>Cryptococcus neoformans species complex</taxon>
    </lineage>
</organism>
<name>VAC8_CRYNJ</name>
<keyword id="KW-0449">Lipoprotein</keyword>
<keyword id="KW-0472">Membrane</keyword>
<keyword id="KW-0519">Myristate</keyword>
<keyword id="KW-1185">Reference proteome</keyword>
<keyword id="KW-0677">Repeat</keyword>
<keyword id="KW-0926">Vacuole</keyword>
<gene>
    <name type="primary">VAC8</name>
    <name type="ordered locus">CNA03500</name>
</gene>
<sequence length="630" mass="67316">MGSALSSCCSPRRKNAYEPLLLETEREAVADLLQYLENRSTTNFFAGSPLAALTTLSFSENVDLQRSAALAFAEITEKEVREVGRDTLDPVLYLLSSHDPEVQRAASAALGNLAVNAENKLLVVSLGGLEPLIRQMLSPNVEVQCNAVGCITNLATHDENKTQIAKSGALVPLTRLAKSKDMRVQRNATGALLNMTHSDENRQQLVAAGAIPVLVSLLNSPDTDVQYYCTTALSNIAVDAANRKKLAQSEPKLVQSLVQLMDSQSLKVQCQAALALRNLASDSKYQLEIVKFGGLKPLLRLLHSSYLPLILSAAACVRNVSIHPANESPIIESGFLQPLIELLSFDENEEVQCHAISTLRNLAASSEKNKGAIVEAGAVEKIKSLVLTVPLAVQSEMTACVAVLALSDDLKPQLLEMGICEVLIPLTNSPSVEVQGNSAAALGNLSSKAAEDYAPFNAVWNKPDGGLHAYLVRFLSSADITFQHIAVWTIVQLLEAEDEQLTNNIRSSPILISSIRQLAKSPPPSRAGGAPRHDPNDPSAGSSEDEFEDGLTDQEGEGEIVSLARRILDLTEVGEEGDEFGERAGRNVPVGSHGQAPGQGQTSQVGSMGSEHAALRASVHRALSGGGRDR</sequence>
<comment type="function">
    <text evidence="1">Functions in both vacuole inheritance and protein targeting from the cytoplasm to vacuole.</text>
</comment>
<comment type="subcellular location">
    <subcellularLocation>
        <location evidence="1">Vacuole membrane</location>
        <topology evidence="1">Lipid-anchor</topology>
    </subcellularLocation>
</comment>
<comment type="similarity">
    <text evidence="3">Belongs to the beta-catenin family.</text>
</comment>
<feature type="initiator methionine" description="Removed" evidence="1">
    <location>
        <position position="1"/>
    </location>
</feature>
<feature type="chain" id="PRO_0000256211" description="Vacuolar protein 8">
    <location>
        <begin position="2"/>
        <end position="630"/>
    </location>
</feature>
<feature type="repeat" description="ARM 1">
    <location>
        <begin position="74"/>
        <end position="115"/>
    </location>
</feature>
<feature type="repeat" description="ARM 2">
    <location>
        <begin position="117"/>
        <end position="156"/>
    </location>
</feature>
<feature type="repeat" description="ARM 3">
    <location>
        <begin position="158"/>
        <end position="197"/>
    </location>
</feature>
<feature type="repeat" description="ARM 4">
    <location>
        <begin position="199"/>
        <end position="238"/>
    </location>
</feature>
<feature type="repeat" description="ARM 5">
    <location>
        <begin position="242"/>
        <end position="281"/>
    </location>
</feature>
<feature type="repeat" description="ARM 6">
    <location>
        <begin position="283"/>
        <end position="322"/>
    </location>
</feature>
<feature type="repeat" description="ARM 7">
    <location>
        <begin position="324"/>
        <end position="364"/>
    </location>
</feature>
<feature type="repeat" description="ARM 8">
    <location>
        <begin position="408"/>
        <end position="447"/>
    </location>
</feature>
<feature type="repeat" description="ARM 9">
    <location>
        <begin position="456"/>
        <end position="495"/>
    </location>
</feature>
<feature type="region of interest" description="Disordered" evidence="2">
    <location>
        <begin position="519"/>
        <end position="558"/>
    </location>
</feature>
<feature type="region of interest" description="Disordered" evidence="2">
    <location>
        <begin position="572"/>
        <end position="630"/>
    </location>
</feature>
<feature type="compositionally biased region" description="Acidic residues" evidence="2">
    <location>
        <begin position="543"/>
        <end position="558"/>
    </location>
</feature>
<feature type="compositionally biased region" description="Polar residues" evidence="2">
    <location>
        <begin position="598"/>
        <end position="607"/>
    </location>
</feature>
<feature type="lipid moiety-binding region" description="N-myristoyl glycine" evidence="1">
    <location>
        <position position="2"/>
    </location>
</feature>
<protein>
    <recommendedName>
        <fullName>Vacuolar protein 8</fullName>
    </recommendedName>
</protein>